<protein>
    <recommendedName>
        <fullName evidence="1">tRNA-2-methylthio-N(6)-dimethylallyladenosine synthase</fullName>
        <ecNumber evidence="1">2.8.4.3</ecNumber>
    </recommendedName>
    <alternativeName>
        <fullName evidence="1">(Dimethylallyl)adenosine tRNA methylthiotransferase MiaB</fullName>
    </alternativeName>
    <alternativeName>
        <fullName evidence="1">tRNA-i(6)A37 methylthiotransferase</fullName>
    </alternativeName>
</protein>
<evidence type="ECO:0000255" key="1">
    <source>
        <dbReference type="HAMAP-Rule" id="MF_01864"/>
    </source>
</evidence>
<evidence type="ECO:0000255" key="2">
    <source>
        <dbReference type="PROSITE-ProRule" id="PRU01266"/>
    </source>
</evidence>
<proteinExistence type="inferred from homology"/>
<reference key="1">
    <citation type="journal article" date="2007" name="Nat. Biotechnol.">
        <title>Complete genome sequence of the erythromycin-producing bacterium Saccharopolyspora erythraea NRRL23338.</title>
        <authorList>
            <person name="Oliynyk M."/>
            <person name="Samborskyy M."/>
            <person name="Lester J.B."/>
            <person name="Mironenko T."/>
            <person name="Scott N."/>
            <person name="Dickens S."/>
            <person name="Haydock S.F."/>
            <person name="Leadlay P.F."/>
        </authorList>
    </citation>
    <scope>NUCLEOTIDE SEQUENCE [LARGE SCALE GENOMIC DNA]</scope>
    <source>
        <strain>ATCC 11635 / DSM 40517 / JCM 4748 / NBRC 13426 / NCIMB 8594 / NRRL 2338</strain>
    </source>
</reference>
<keyword id="KW-0004">4Fe-4S</keyword>
<keyword id="KW-0963">Cytoplasm</keyword>
<keyword id="KW-0408">Iron</keyword>
<keyword id="KW-0411">Iron-sulfur</keyword>
<keyword id="KW-0479">Metal-binding</keyword>
<keyword id="KW-1185">Reference proteome</keyword>
<keyword id="KW-0949">S-adenosyl-L-methionine</keyword>
<keyword id="KW-0808">Transferase</keyword>
<keyword id="KW-0819">tRNA processing</keyword>
<dbReference type="EC" id="2.8.4.3" evidence="1"/>
<dbReference type="EMBL" id="AM420293">
    <property type="protein sequence ID" value="CAM01066.1"/>
    <property type="molecule type" value="Genomic_DNA"/>
</dbReference>
<dbReference type="RefSeq" id="WP_009943786.1">
    <property type="nucleotide sequence ID" value="NC_009142.1"/>
</dbReference>
<dbReference type="SMR" id="A4FAJ1"/>
<dbReference type="STRING" id="405948.SACE_1748"/>
<dbReference type="KEGG" id="sen:SACE_1748"/>
<dbReference type="eggNOG" id="COG0621">
    <property type="taxonomic scope" value="Bacteria"/>
</dbReference>
<dbReference type="HOGENOM" id="CLU_018697_2_2_11"/>
<dbReference type="OrthoDB" id="9805215at2"/>
<dbReference type="Proteomes" id="UP000006728">
    <property type="component" value="Chromosome"/>
</dbReference>
<dbReference type="GO" id="GO:0005829">
    <property type="term" value="C:cytosol"/>
    <property type="evidence" value="ECO:0007669"/>
    <property type="project" value="TreeGrafter"/>
</dbReference>
<dbReference type="GO" id="GO:0051539">
    <property type="term" value="F:4 iron, 4 sulfur cluster binding"/>
    <property type="evidence" value="ECO:0007669"/>
    <property type="project" value="UniProtKB-UniRule"/>
</dbReference>
<dbReference type="GO" id="GO:0046872">
    <property type="term" value="F:metal ion binding"/>
    <property type="evidence" value="ECO:0007669"/>
    <property type="project" value="UniProtKB-KW"/>
</dbReference>
<dbReference type="GO" id="GO:0035597">
    <property type="term" value="F:N6-isopentenyladenosine methylthiotransferase activity"/>
    <property type="evidence" value="ECO:0007669"/>
    <property type="project" value="TreeGrafter"/>
</dbReference>
<dbReference type="CDD" id="cd01335">
    <property type="entry name" value="Radical_SAM"/>
    <property type="match status" value="1"/>
</dbReference>
<dbReference type="FunFam" id="3.40.50.12160:FF:000003">
    <property type="entry name" value="CDK5 regulatory subunit-associated protein 1"/>
    <property type="match status" value="1"/>
</dbReference>
<dbReference type="FunFam" id="3.80.30.20:FF:000001">
    <property type="entry name" value="tRNA-2-methylthio-N(6)-dimethylallyladenosine synthase 2"/>
    <property type="match status" value="1"/>
</dbReference>
<dbReference type="Gene3D" id="3.40.50.12160">
    <property type="entry name" value="Methylthiotransferase, N-terminal domain"/>
    <property type="match status" value="1"/>
</dbReference>
<dbReference type="Gene3D" id="3.80.30.20">
    <property type="entry name" value="tm_1862 like domain"/>
    <property type="match status" value="1"/>
</dbReference>
<dbReference type="HAMAP" id="MF_01864">
    <property type="entry name" value="tRNA_metthiotr_MiaB"/>
    <property type="match status" value="1"/>
</dbReference>
<dbReference type="InterPro" id="IPR006638">
    <property type="entry name" value="Elp3/MiaA/NifB-like_rSAM"/>
</dbReference>
<dbReference type="InterPro" id="IPR005839">
    <property type="entry name" value="Methylthiotransferase"/>
</dbReference>
<dbReference type="InterPro" id="IPR020612">
    <property type="entry name" value="Methylthiotransferase_CS"/>
</dbReference>
<dbReference type="InterPro" id="IPR013848">
    <property type="entry name" value="Methylthiotransferase_N"/>
</dbReference>
<dbReference type="InterPro" id="IPR038135">
    <property type="entry name" value="Methylthiotransferase_N_sf"/>
</dbReference>
<dbReference type="InterPro" id="IPR006463">
    <property type="entry name" value="MiaB_methiolase"/>
</dbReference>
<dbReference type="InterPro" id="IPR007197">
    <property type="entry name" value="rSAM"/>
</dbReference>
<dbReference type="InterPro" id="IPR023404">
    <property type="entry name" value="rSAM_horseshoe"/>
</dbReference>
<dbReference type="InterPro" id="IPR002792">
    <property type="entry name" value="TRAM_dom"/>
</dbReference>
<dbReference type="NCBIfam" id="TIGR01574">
    <property type="entry name" value="miaB-methiolase"/>
    <property type="match status" value="1"/>
</dbReference>
<dbReference type="NCBIfam" id="TIGR00089">
    <property type="entry name" value="MiaB/RimO family radical SAM methylthiotransferase"/>
    <property type="match status" value="1"/>
</dbReference>
<dbReference type="PANTHER" id="PTHR43020">
    <property type="entry name" value="CDK5 REGULATORY SUBUNIT-ASSOCIATED PROTEIN 1"/>
    <property type="match status" value="1"/>
</dbReference>
<dbReference type="PANTHER" id="PTHR43020:SF2">
    <property type="entry name" value="MITOCHONDRIAL TRNA METHYLTHIOTRANSFERASE CDK5RAP1"/>
    <property type="match status" value="1"/>
</dbReference>
<dbReference type="Pfam" id="PF04055">
    <property type="entry name" value="Radical_SAM"/>
    <property type="match status" value="1"/>
</dbReference>
<dbReference type="Pfam" id="PF00919">
    <property type="entry name" value="UPF0004"/>
    <property type="match status" value="1"/>
</dbReference>
<dbReference type="SFLD" id="SFLDF00273">
    <property type="entry name" value="(dimethylallyl)adenosine_tRNA"/>
    <property type="match status" value="1"/>
</dbReference>
<dbReference type="SFLD" id="SFLDG01082">
    <property type="entry name" value="B12-binding_domain_containing"/>
    <property type="match status" value="1"/>
</dbReference>
<dbReference type="SFLD" id="SFLDS00029">
    <property type="entry name" value="Radical_SAM"/>
    <property type="match status" value="1"/>
</dbReference>
<dbReference type="SMART" id="SM00729">
    <property type="entry name" value="Elp3"/>
    <property type="match status" value="1"/>
</dbReference>
<dbReference type="SUPFAM" id="SSF102114">
    <property type="entry name" value="Radical SAM enzymes"/>
    <property type="match status" value="1"/>
</dbReference>
<dbReference type="PROSITE" id="PS51449">
    <property type="entry name" value="MTTASE_N"/>
    <property type="match status" value="1"/>
</dbReference>
<dbReference type="PROSITE" id="PS01278">
    <property type="entry name" value="MTTASE_RADICAL"/>
    <property type="match status" value="1"/>
</dbReference>
<dbReference type="PROSITE" id="PS51918">
    <property type="entry name" value="RADICAL_SAM"/>
    <property type="match status" value="1"/>
</dbReference>
<dbReference type="PROSITE" id="PS50926">
    <property type="entry name" value="TRAM"/>
    <property type="match status" value="1"/>
</dbReference>
<feature type="chain" id="PRO_0000374515" description="tRNA-2-methylthio-N(6)-dimethylallyladenosine synthase">
    <location>
        <begin position="1"/>
        <end position="491"/>
    </location>
</feature>
<feature type="domain" description="MTTase N-terminal" evidence="1">
    <location>
        <begin position="3"/>
        <end position="119"/>
    </location>
</feature>
<feature type="domain" description="Radical SAM core" evidence="2">
    <location>
        <begin position="142"/>
        <end position="372"/>
    </location>
</feature>
<feature type="domain" description="TRAM" evidence="1">
    <location>
        <begin position="375"/>
        <end position="446"/>
    </location>
</feature>
<feature type="binding site" evidence="1">
    <location>
        <position position="12"/>
    </location>
    <ligand>
        <name>[4Fe-4S] cluster</name>
        <dbReference type="ChEBI" id="CHEBI:49883"/>
        <label>1</label>
    </ligand>
</feature>
<feature type="binding site" evidence="1">
    <location>
        <position position="48"/>
    </location>
    <ligand>
        <name>[4Fe-4S] cluster</name>
        <dbReference type="ChEBI" id="CHEBI:49883"/>
        <label>1</label>
    </ligand>
</feature>
<feature type="binding site" evidence="1">
    <location>
        <position position="82"/>
    </location>
    <ligand>
        <name>[4Fe-4S] cluster</name>
        <dbReference type="ChEBI" id="CHEBI:49883"/>
        <label>1</label>
    </ligand>
</feature>
<feature type="binding site" evidence="1">
    <location>
        <position position="156"/>
    </location>
    <ligand>
        <name>[4Fe-4S] cluster</name>
        <dbReference type="ChEBI" id="CHEBI:49883"/>
        <label>2</label>
        <note>4Fe-4S-S-AdoMet</note>
    </ligand>
</feature>
<feature type="binding site" evidence="1">
    <location>
        <position position="160"/>
    </location>
    <ligand>
        <name>[4Fe-4S] cluster</name>
        <dbReference type="ChEBI" id="CHEBI:49883"/>
        <label>2</label>
        <note>4Fe-4S-S-AdoMet</note>
    </ligand>
</feature>
<feature type="binding site" evidence="1">
    <location>
        <position position="163"/>
    </location>
    <ligand>
        <name>[4Fe-4S] cluster</name>
        <dbReference type="ChEBI" id="CHEBI:49883"/>
        <label>2</label>
        <note>4Fe-4S-S-AdoMet</note>
    </ligand>
</feature>
<gene>
    <name evidence="1" type="primary">miaB</name>
    <name type="ordered locus">SACE_1748</name>
</gene>
<organism>
    <name type="scientific">Saccharopolyspora erythraea (strain ATCC 11635 / DSM 40517 / JCM 4748 / NBRC 13426 / NCIMB 8594 / NRRL 2338)</name>
    <dbReference type="NCBI Taxonomy" id="405948"/>
    <lineage>
        <taxon>Bacteria</taxon>
        <taxon>Bacillati</taxon>
        <taxon>Actinomycetota</taxon>
        <taxon>Actinomycetes</taxon>
        <taxon>Pseudonocardiales</taxon>
        <taxon>Pseudonocardiaceae</taxon>
        <taxon>Saccharopolyspora</taxon>
    </lineage>
</organism>
<sequence>MTRSYQIRTYGCQMNVHDSERLAGMLEDAGYVRAGTDVDPDVVVFNTCAVRENADNRLYGNLGHLRPAKDRNPGMQIAVGGCLAQKDRGEIVKRAPWVDVVFGTHNLGSLPTLLERARHNEEAEVEILESLDVFPSTLPARRESAYSGWVSVSVGCNNTCTFCIVPALRGKEKDRRPGEILSEVQALVSEGVLEVTLLGQNVNAYGVEFGDRFAFGKLLRSCGEIEGLERVRFTSPHPRDFTDDVIAAMAETPNVCHQLHMPLQSGSDRVLKQMRRSYRSQRYLDILRKVREAMPDAAITTDIIVGFPGETEEDFEATMQVVREARFASAFTFQYSKRPGTPAAEMEGQLPKEVVQQRYDRLIELQNQISWDVGKELVGRSVELLVAEGEGRKDTETHRLSGRARDGRLVHFTPVGAVDGQVRPGDVVHTTITRAAPHHLVADSEITAHRRTRAGDHWEEGVRPKTSGVSLGLPSFGAPPAQPAAQQGCAC</sequence>
<comment type="function">
    <text evidence="1">Catalyzes the methylthiolation of N6-(dimethylallyl)adenosine (i(6)A), leading to the formation of 2-methylthio-N6-(dimethylallyl)adenosine (ms(2)i(6)A) at position 37 in tRNAs that read codons beginning with uridine.</text>
</comment>
<comment type="catalytic activity">
    <reaction evidence="1">
        <text>N(6)-dimethylallyladenosine(37) in tRNA + (sulfur carrier)-SH + AH2 + 2 S-adenosyl-L-methionine = 2-methylsulfanyl-N(6)-dimethylallyladenosine(37) in tRNA + (sulfur carrier)-H + 5'-deoxyadenosine + L-methionine + A + S-adenosyl-L-homocysteine + 2 H(+)</text>
        <dbReference type="Rhea" id="RHEA:37067"/>
        <dbReference type="Rhea" id="RHEA-COMP:10375"/>
        <dbReference type="Rhea" id="RHEA-COMP:10376"/>
        <dbReference type="Rhea" id="RHEA-COMP:14737"/>
        <dbReference type="Rhea" id="RHEA-COMP:14739"/>
        <dbReference type="ChEBI" id="CHEBI:13193"/>
        <dbReference type="ChEBI" id="CHEBI:15378"/>
        <dbReference type="ChEBI" id="CHEBI:17319"/>
        <dbReference type="ChEBI" id="CHEBI:17499"/>
        <dbReference type="ChEBI" id="CHEBI:29917"/>
        <dbReference type="ChEBI" id="CHEBI:57844"/>
        <dbReference type="ChEBI" id="CHEBI:57856"/>
        <dbReference type="ChEBI" id="CHEBI:59789"/>
        <dbReference type="ChEBI" id="CHEBI:64428"/>
        <dbReference type="ChEBI" id="CHEBI:74415"/>
        <dbReference type="ChEBI" id="CHEBI:74417"/>
        <dbReference type="EC" id="2.8.4.3"/>
    </reaction>
</comment>
<comment type="cofactor">
    <cofactor evidence="1">
        <name>[4Fe-4S] cluster</name>
        <dbReference type="ChEBI" id="CHEBI:49883"/>
    </cofactor>
    <text evidence="1">Binds 2 [4Fe-4S] clusters. One cluster is coordinated with 3 cysteines and an exchangeable S-adenosyl-L-methionine.</text>
</comment>
<comment type="subunit">
    <text evidence="1">Monomer.</text>
</comment>
<comment type="subcellular location">
    <subcellularLocation>
        <location evidence="1">Cytoplasm</location>
    </subcellularLocation>
</comment>
<comment type="similarity">
    <text evidence="1">Belongs to the methylthiotransferase family. MiaB subfamily.</text>
</comment>
<name>MIAB_SACEN</name>
<accession>A4FAJ1</accession>